<organismHost>
    <name type="scientific">Aves</name>
    <dbReference type="NCBI Taxonomy" id="8782"/>
</organismHost>
<organismHost>
    <name type="scientific">Homo sapiens</name>
    <name type="common">Human</name>
    <dbReference type="NCBI Taxonomy" id="9606"/>
</organismHost>
<organismHost>
    <name type="scientific">Sus scrofa</name>
    <name type="common">Pig</name>
    <dbReference type="NCBI Taxonomy" id="9823"/>
</organismHost>
<dbReference type="EMBL" id="CY021060">
    <property type="protein sequence ID" value="ABO52290.1"/>
    <property type="molecule type" value="Viral_cRNA"/>
</dbReference>
<dbReference type="SMR" id="A4K153"/>
<dbReference type="PRO" id="PR:A4K153"/>
<dbReference type="Proteomes" id="UP000008219">
    <property type="component" value="Genome"/>
</dbReference>
<dbReference type="GO" id="GO:0033650">
    <property type="term" value="C:host cell mitochondrion"/>
    <property type="evidence" value="ECO:0007669"/>
    <property type="project" value="UniProtKB-SubCell"/>
</dbReference>
<dbReference type="GO" id="GO:0042025">
    <property type="term" value="C:host cell nucleus"/>
    <property type="evidence" value="ECO:0007669"/>
    <property type="project" value="UniProtKB-SubCell"/>
</dbReference>
<dbReference type="GO" id="GO:0044423">
    <property type="term" value="C:virion component"/>
    <property type="evidence" value="ECO:0007669"/>
    <property type="project" value="UniProtKB-UniRule"/>
</dbReference>
<dbReference type="GO" id="GO:0003723">
    <property type="term" value="F:RNA binding"/>
    <property type="evidence" value="ECO:0007669"/>
    <property type="project" value="UniProtKB-UniRule"/>
</dbReference>
<dbReference type="GO" id="GO:0003968">
    <property type="term" value="F:RNA-directed RNA polymerase activity"/>
    <property type="evidence" value="ECO:0007669"/>
    <property type="project" value="UniProtKB-UniRule"/>
</dbReference>
<dbReference type="GO" id="GO:0006370">
    <property type="term" value="P:7-methylguanosine mRNA capping"/>
    <property type="evidence" value="ECO:0007669"/>
    <property type="project" value="UniProtKB-UniRule"/>
</dbReference>
<dbReference type="GO" id="GO:0075526">
    <property type="term" value="P:cap snatching"/>
    <property type="evidence" value="ECO:0007669"/>
    <property type="project" value="UniProtKB-UniRule"/>
</dbReference>
<dbReference type="GO" id="GO:0006351">
    <property type="term" value="P:DNA-templated transcription"/>
    <property type="evidence" value="ECO:0007669"/>
    <property type="project" value="UniProtKB-UniRule"/>
</dbReference>
<dbReference type="GO" id="GO:0039545">
    <property type="term" value="P:symbiont-mediated suppression of host cytoplasmic pattern recognition receptor signaling pathway via inhibition of MAVS activity"/>
    <property type="evidence" value="ECO:0007669"/>
    <property type="project" value="UniProtKB-UniRule"/>
</dbReference>
<dbReference type="GO" id="GO:0039657">
    <property type="term" value="P:symbiont-mediated suppression of host gene expression"/>
    <property type="evidence" value="ECO:0007669"/>
    <property type="project" value="UniProtKB-KW"/>
</dbReference>
<dbReference type="GO" id="GO:0039523">
    <property type="term" value="P:symbiont-mediated suppression of host mRNA transcription via inhibition of RNA polymerase II activity"/>
    <property type="evidence" value="ECO:0007669"/>
    <property type="project" value="UniProtKB-UniRule"/>
</dbReference>
<dbReference type="GO" id="GO:0039694">
    <property type="term" value="P:viral RNA genome replication"/>
    <property type="evidence" value="ECO:0007669"/>
    <property type="project" value="InterPro"/>
</dbReference>
<dbReference type="FunFam" id="3.30.30.90:FF:000001">
    <property type="entry name" value="Polymerase basic protein 2"/>
    <property type="match status" value="1"/>
</dbReference>
<dbReference type="Gene3D" id="3.30.30.90">
    <property type="entry name" value="Polymerase Basic Protein 2, C-terminal domain"/>
    <property type="match status" value="1"/>
</dbReference>
<dbReference type="HAMAP" id="MF_04062">
    <property type="entry name" value="INV_PB2"/>
    <property type="match status" value="1"/>
</dbReference>
<dbReference type="InterPro" id="IPR049110">
    <property type="entry name" value="Flu_PB2_2nd"/>
</dbReference>
<dbReference type="InterPro" id="IPR049114">
    <property type="entry name" value="Flu_PB2_6th"/>
</dbReference>
<dbReference type="InterPro" id="IPR049115">
    <property type="entry name" value="Flu_PB2_C"/>
</dbReference>
<dbReference type="InterPro" id="IPR048298">
    <property type="entry name" value="Flu_PB2_CAP-bd"/>
</dbReference>
<dbReference type="InterPro" id="IPR049111">
    <property type="entry name" value="Flu_PB2_middle"/>
</dbReference>
<dbReference type="InterPro" id="IPR049106">
    <property type="entry name" value="Flu_PB2_N"/>
</dbReference>
<dbReference type="InterPro" id="IPR001591">
    <property type="entry name" value="INV_PB2"/>
</dbReference>
<dbReference type="InterPro" id="IPR049113">
    <property type="entry name" value="PB2_helical"/>
</dbReference>
<dbReference type="InterPro" id="IPR037258">
    <property type="entry name" value="PDB2_C"/>
</dbReference>
<dbReference type="Pfam" id="PF20947">
    <property type="entry name" value="Flu_PB2_1st"/>
    <property type="match status" value="1"/>
</dbReference>
<dbReference type="Pfam" id="PF20948">
    <property type="entry name" value="Flu_PB2_2nd"/>
    <property type="match status" value="1"/>
</dbReference>
<dbReference type="Pfam" id="PF20949">
    <property type="entry name" value="Flu_PB2_3rd"/>
    <property type="match status" value="1"/>
</dbReference>
<dbReference type="Pfam" id="PF20950">
    <property type="entry name" value="Flu_PB2_4th"/>
    <property type="match status" value="1"/>
</dbReference>
<dbReference type="Pfam" id="PF00604">
    <property type="entry name" value="Flu_PB2_5th"/>
    <property type="match status" value="1"/>
</dbReference>
<dbReference type="Pfam" id="PF20951">
    <property type="entry name" value="Flu_PB2_6th"/>
    <property type="match status" value="1"/>
</dbReference>
<dbReference type="Pfam" id="PF20952">
    <property type="entry name" value="Flu_PB2_7th"/>
    <property type="match status" value="1"/>
</dbReference>
<dbReference type="SUPFAM" id="SSF160453">
    <property type="entry name" value="PB2 C-terminal domain-like"/>
    <property type="match status" value="1"/>
</dbReference>
<feature type="chain" id="PRO_0000373036" description="Polymerase basic protein 2">
    <location>
        <begin position="1"/>
        <end position="759"/>
    </location>
</feature>
<feature type="short sequence motif" description="Nuclear localization signal" evidence="1">
    <location>
        <begin position="736"/>
        <end position="739"/>
    </location>
</feature>
<feature type="site" description="Mammalian adaptation" evidence="1">
    <location>
        <position position="627"/>
    </location>
</feature>
<evidence type="ECO:0000255" key="1">
    <source>
        <dbReference type="HAMAP-Rule" id="MF_04062"/>
    </source>
</evidence>
<organism>
    <name type="scientific">Influenza A virus (strain A/Malaysia:Malaya/302/1954 H1N1)</name>
    <dbReference type="NCBI Taxonomy" id="425566"/>
    <lineage>
        <taxon>Viruses</taxon>
        <taxon>Riboviria</taxon>
        <taxon>Orthornavirae</taxon>
        <taxon>Negarnaviricota</taxon>
        <taxon>Polyploviricotina</taxon>
        <taxon>Insthoviricetes</taxon>
        <taxon>Articulavirales</taxon>
        <taxon>Orthomyxoviridae</taxon>
        <taxon>Alphainfluenzavirus</taxon>
        <taxon>Alphainfluenzavirus influenzae</taxon>
        <taxon>Influenza A virus</taxon>
    </lineage>
</organism>
<sequence>MERIKELRNLMSQSRTREILTKTTVDHMAIIKKYTSGRQEKNPSLRMKWMMAMKYPITADKRITEMIPERNEQGQTLWSKINDAGSDRVMVSPLAVTWWNRNGPMTSTVHYPKIYKTYFEKVERLKHGTFGPVHFRNQVKIRRRVDINPGHADLSAKEAQDVIMEVVFPNEVGARILTSESQLMVTKEKKEELQDCKISPLMVAYMLERELVRKTRFLPVAGGTSSVYIEVLHLTQGTCWEQMYTPGGEVRNDDVDQSLIIAARNIVRRAAVSADPLASLLEMCHSTQIGGTRMVDILRQNPTEEQAVDICKAAMGLRISSSFSFGGFTFKRTSGSSVKREEEVLTGNLQTLKIRVHEGYEEFTMVGKRATAILRKETRRLIQLIVSGRDEQSIAEAIIVAMVFSQEDCMIKAVRGDLNFVNRANQRLNPMHQLLRHFQKDAKVLFQNWGIEHIDNVMGMIGILPDMTPSTEMSMRGIRVSKMGVDEYSSAERVVVSIDRFLRVRDQRGNVLLSPEEVSETQGTEKLTITYSSSMMWEINGPESVLVNTYQWIIRNWETVKIQWSQNPTMLYNKLEFEPFQSLVPKAIRGQYSGFVRTLFQQMRDVLGTFDTTQIIKLLPFAAAPPKQSRMQFSSLTVNVRGSGMRILVRGNSPVFNYNKTTKRLTVLGKDAGTLTEDPDEGTAGVESAVLRGFLILGKEDRRYGPALSINELSNLAKGEKANVLIGQGDVVLVMKRKRDSSILTDSQTATKRIRMAIN</sequence>
<protein>
    <recommendedName>
        <fullName evidence="1">Polymerase basic protein 2</fullName>
    </recommendedName>
    <alternativeName>
        <fullName evidence="1">RNA-directed RNA polymerase subunit P3</fullName>
    </alternativeName>
</protein>
<accession>A4K153</accession>
<proteinExistence type="inferred from homology"/>
<reference key="1">
    <citation type="submission" date="2007-03" db="EMBL/GenBank/DDBJ databases">
        <title>The NIAID influenza genome sequencing project.</title>
        <authorList>
            <person name="Ghedin E."/>
            <person name="Spiro D."/>
            <person name="Miller N."/>
            <person name="Zaborsky J."/>
            <person name="Feldblyum T."/>
            <person name="Subbu V."/>
            <person name="Shumway M."/>
            <person name="Sparenborg J."/>
            <person name="Groveman L."/>
            <person name="Halpin R."/>
            <person name="Sitz J."/>
            <person name="Koo H."/>
            <person name="Salzberg S.L."/>
            <person name="Webster R.G."/>
            <person name="Hoffmann E."/>
            <person name="Krauss S."/>
            <person name="Naeve C."/>
            <person name="Bao Y."/>
            <person name="Bolotov P."/>
            <person name="Dernovoy D."/>
            <person name="Kiryutin B."/>
            <person name="Lipman D.J."/>
            <person name="Tatusova T."/>
        </authorList>
    </citation>
    <scope>NUCLEOTIDE SEQUENCE [GENOMIC RNA]</scope>
</reference>
<reference key="2">
    <citation type="submission" date="2007-03" db="EMBL/GenBank/DDBJ databases">
        <authorList>
            <consortium name="The NIAID Influenza Genome Sequencing Consortium"/>
        </authorList>
    </citation>
    <scope>NUCLEOTIDE SEQUENCE [GENOMIC RNA]</scope>
</reference>
<name>PB2_I54A2</name>
<gene>
    <name evidence="1" type="primary">PB2</name>
</gene>
<keyword id="KW-1157">Cap snatching</keyword>
<keyword id="KW-1262">Eukaryotic host gene expression shutoff by virus</keyword>
<keyword id="KW-1191">Eukaryotic host transcription shutoff by virus</keyword>
<keyword id="KW-1190">Host gene expression shutoff by virus</keyword>
<keyword id="KW-1045">Host mitochondrion</keyword>
<keyword id="KW-1048">Host nucleus</keyword>
<keyword id="KW-0945">Host-virus interaction</keyword>
<keyword id="KW-1090">Inhibition of host innate immune response by virus</keyword>
<keyword id="KW-1097">Inhibition of host MAVS by virus</keyword>
<keyword id="KW-1113">Inhibition of host RLR pathway by virus</keyword>
<keyword id="KW-1104">Inhibition of host RNA polymerase II by virus</keyword>
<keyword id="KW-0506">mRNA capping</keyword>
<keyword id="KW-0507">mRNA processing</keyword>
<keyword id="KW-0899">Viral immunoevasion</keyword>
<keyword id="KW-1195">Viral transcription</keyword>
<keyword id="KW-0946">Virion</keyword>
<comment type="function">
    <text evidence="1">Plays an essential role in transcription initiation and cap-stealing mechanism, in which cellular capped pre-mRNAs are used to generate primers for viral transcription. Recognizes and binds the 7-methylguanosine-containing cap of the target pre-RNA which is subsequently cleaved after 10-13 nucleotides by the viral protein PA. Plays a role in the initiation of the viral genome replication and modulates the activity of the ribonucleoprotein (RNP) complex. In addition, participates in the inhibition of type I interferon induction through interaction with and inhibition of the host mitochondrial antiviral signaling protein MAVS.</text>
</comment>
<comment type="subunit">
    <text evidence="1">Influenza RNA polymerase is composed of three subunits: PB1, PB2 and PA. Interacts (via N-terminus) with PB1 (via C-terminus). Interacts with nucleoprotein NP (via N-terminus). Interacts (via N-terminus) with host MAVS (via N-terminus); this interaction inhibits host innate immune response.</text>
</comment>
<comment type="subcellular location">
    <subcellularLocation>
        <location evidence="1">Virion</location>
    </subcellularLocation>
    <subcellularLocation>
        <location evidence="1">Host nucleus</location>
    </subcellularLocation>
    <subcellularLocation>
        <location evidence="1">Host mitochondrion</location>
    </subcellularLocation>
</comment>
<comment type="similarity">
    <text evidence="1">Belongs to the influenza viruses PB2 family.</text>
</comment>